<accession>A8W3H7</accession>
<keyword id="KW-0066">ATP synthesis</keyword>
<keyword id="KW-0138">CF(0)</keyword>
<keyword id="KW-0375">Hydrogen ion transport</keyword>
<keyword id="KW-0406">Ion transport</keyword>
<keyword id="KW-0446">Lipid-binding</keyword>
<keyword id="KW-0472">Membrane</keyword>
<keyword id="KW-0934">Plastid</keyword>
<keyword id="KW-0812">Transmembrane</keyword>
<keyword id="KW-1133">Transmembrane helix</keyword>
<keyword id="KW-0813">Transport</keyword>
<evidence type="ECO:0000255" key="1">
    <source>
        <dbReference type="HAMAP-Rule" id="MF_01396"/>
    </source>
</evidence>
<evidence type="ECO:0000305" key="2"/>
<reference key="1">
    <citation type="journal article" date="2007" name="BMC Plant Biol.">
        <title>Complete plastid genome sequences suggest strong selection for retention of photosynthetic genes in the parasitic plant genus Cuscuta.</title>
        <authorList>
            <person name="McNeal J.R."/>
            <person name="Kuehl J.V."/>
            <person name="Boore J.L."/>
            <person name="dePamphilis C.W."/>
        </authorList>
    </citation>
    <scope>NUCLEOTIDE SEQUENCE [LARGE SCALE GENOMIC DNA]</scope>
</reference>
<sequence>MNPIISAASVIAAGFAVGLASIGPGIGQGTAAGRAVEGIARQPEAEGKIRGTLLLSLAFMEALTIYGLVVALALLFANPFI</sequence>
<dbReference type="EMBL" id="EU189133">
    <property type="protein sequence ID" value="ABW20552.1"/>
    <property type="molecule type" value="Genomic_DNA"/>
</dbReference>
<dbReference type="RefSeq" id="YP_001531207.1">
    <property type="nucleotide sequence ID" value="NC_009949.1"/>
</dbReference>
<dbReference type="SMR" id="A8W3H7"/>
<dbReference type="GeneID" id="5714831"/>
<dbReference type="GO" id="GO:0005886">
    <property type="term" value="C:plasma membrane"/>
    <property type="evidence" value="ECO:0007669"/>
    <property type="project" value="UniProtKB-UniRule"/>
</dbReference>
<dbReference type="GO" id="GO:0042170">
    <property type="term" value="C:plastid membrane"/>
    <property type="evidence" value="ECO:0007669"/>
    <property type="project" value="UniProtKB-SubCell"/>
</dbReference>
<dbReference type="GO" id="GO:0045259">
    <property type="term" value="C:proton-transporting ATP synthase complex"/>
    <property type="evidence" value="ECO:0007669"/>
    <property type="project" value="UniProtKB-KW"/>
</dbReference>
<dbReference type="GO" id="GO:0033177">
    <property type="term" value="C:proton-transporting two-sector ATPase complex, proton-transporting domain"/>
    <property type="evidence" value="ECO:0007669"/>
    <property type="project" value="InterPro"/>
</dbReference>
<dbReference type="GO" id="GO:0008289">
    <property type="term" value="F:lipid binding"/>
    <property type="evidence" value="ECO:0007669"/>
    <property type="project" value="UniProtKB-KW"/>
</dbReference>
<dbReference type="GO" id="GO:0046933">
    <property type="term" value="F:proton-transporting ATP synthase activity, rotational mechanism"/>
    <property type="evidence" value="ECO:0007669"/>
    <property type="project" value="UniProtKB-UniRule"/>
</dbReference>
<dbReference type="CDD" id="cd18183">
    <property type="entry name" value="ATP-synt_Fo_c_ATPH"/>
    <property type="match status" value="1"/>
</dbReference>
<dbReference type="FunFam" id="1.20.20.10:FF:000001">
    <property type="entry name" value="ATP synthase subunit c, chloroplastic"/>
    <property type="match status" value="1"/>
</dbReference>
<dbReference type="Gene3D" id="1.20.20.10">
    <property type="entry name" value="F1F0 ATP synthase subunit C"/>
    <property type="match status" value="1"/>
</dbReference>
<dbReference type="HAMAP" id="MF_01396">
    <property type="entry name" value="ATP_synth_c_bact"/>
    <property type="match status" value="1"/>
</dbReference>
<dbReference type="InterPro" id="IPR005953">
    <property type="entry name" value="ATP_synth_csu_bac/chlpt"/>
</dbReference>
<dbReference type="InterPro" id="IPR000454">
    <property type="entry name" value="ATP_synth_F0_csu"/>
</dbReference>
<dbReference type="InterPro" id="IPR020537">
    <property type="entry name" value="ATP_synth_F0_csu_DDCD_BS"/>
</dbReference>
<dbReference type="InterPro" id="IPR038662">
    <property type="entry name" value="ATP_synth_F0_csu_sf"/>
</dbReference>
<dbReference type="InterPro" id="IPR002379">
    <property type="entry name" value="ATPase_proteolipid_c-like_dom"/>
</dbReference>
<dbReference type="InterPro" id="IPR035921">
    <property type="entry name" value="F/V-ATP_Csub_sf"/>
</dbReference>
<dbReference type="NCBIfam" id="TIGR01260">
    <property type="entry name" value="ATP_synt_c"/>
    <property type="match status" value="1"/>
</dbReference>
<dbReference type="NCBIfam" id="NF005608">
    <property type="entry name" value="PRK07354.1"/>
    <property type="match status" value="1"/>
</dbReference>
<dbReference type="PANTHER" id="PTHR10031">
    <property type="entry name" value="ATP SYNTHASE LIPID-BINDING PROTEIN, MITOCHONDRIAL"/>
    <property type="match status" value="1"/>
</dbReference>
<dbReference type="PANTHER" id="PTHR10031:SF0">
    <property type="entry name" value="ATPASE PROTEIN 9"/>
    <property type="match status" value="1"/>
</dbReference>
<dbReference type="Pfam" id="PF00137">
    <property type="entry name" value="ATP-synt_C"/>
    <property type="match status" value="1"/>
</dbReference>
<dbReference type="PRINTS" id="PR00124">
    <property type="entry name" value="ATPASEC"/>
</dbReference>
<dbReference type="SUPFAM" id="SSF81333">
    <property type="entry name" value="F1F0 ATP synthase subunit C"/>
    <property type="match status" value="1"/>
</dbReference>
<dbReference type="PROSITE" id="PS00605">
    <property type="entry name" value="ATPASE_C"/>
    <property type="match status" value="1"/>
</dbReference>
<comment type="function">
    <text evidence="1">F(1)F(0) ATP synthase produces ATP from ADP in the presence of a proton or sodium gradient. F-type ATPases consist of two structural domains, F(1) containing the extramembraneous catalytic core and F(0) containing the membrane proton channel, linked together by a central stalk and a peripheral stalk. During catalysis, ATP synthesis in the catalytic domain of F(1) is coupled via a rotary mechanism of the central stalk subunits to proton translocation.</text>
</comment>
<comment type="function">
    <text evidence="1">Key component of the F(0) channel; it plays a direct role in translocation across the membrane. A homomeric c-ring of between 10-14 subunits forms the central stalk rotor element with the F(1) delta and epsilon subunits.</text>
</comment>
<comment type="subunit">
    <text evidence="1">F-type ATPases have 2 components, F(1) - the catalytic core - and F(0) - the membrane proton channel. F(1) has five subunits: alpha(3), beta(3), gamma(1), delta(1), epsilon(1). F(0) has four main subunits: a(1), b(1), b'(1) and c(10-14). The alpha and beta chains form an alternating ring which encloses part of the gamma chain. F(1) is attached to F(0) by a central stalk formed by the gamma and epsilon chains, while a peripheral stalk is formed by the delta, b and b' chains.</text>
</comment>
<comment type="subcellular location">
    <subcellularLocation>
        <location evidence="2">Plastid membrane</location>
        <topology evidence="1">Multi-pass membrane protein</topology>
    </subcellularLocation>
</comment>
<comment type="similarity">
    <text evidence="1">Belongs to the ATPase C chain family.</text>
</comment>
<comment type="caution">
    <text evidence="2">Only inflorescences, fruits, starved seedlings and stressed stem tips are green in this organism.</text>
</comment>
<protein>
    <recommendedName>
        <fullName>ATP synthase subunit C, plastid</fullName>
    </recommendedName>
    <alternativeName>
        <fullName>ATP synthase F0 sector subunit C</fullName>
    </alternativeName>
    <alternativeName>
        <fullName evidence="1">ATPase subunit III</fullName>
    </alternativeName>
    <alternativeName>
        <fullName evidence="1">Lipid-binding protein</fullName>
    </alternativeName>
</protein>
<geneLocation type="plastid"/>
<gene>
    <name evidence="1" type="primary">atpE</name>
    <name evidence="1" type="synonym">atpH</name>
</gene>
<organism>
    <name type="scientific">Cuscuta obtusiflora</name>
    <name type="common">Peruvian dodder</name>
    <dbReference type="NCBI Taxonomy" id="437280"/>
    <lineage>
        <taxon>Eukaryota</taxon>
        <taxon>Viridiplantae</taxon>
        <taxon>Streptophyta</taxon>
        <taxon>Embryophyta</taxon>
        <taxon>Tracheophyta</taxon>
        <taxon>Spermatophyta</taxon>
        <taxon>Magnoliopsida</taxon>
        <taxon>eudicotyledons</taxon>
        <taxon>Gunneridae</taxon>
        <taxon>Pentapetalae</taxon>
        <taxon>asterids</taxon>
        <taxon>lamiids</taxon>
        <taxon>Solanales</taxon>
        <taxon>Convolvulaceae</taxon>
        <taxon>Cuscuteae</taxon>
        <taxon>Cuscuta</taxon>
        <taxon>Cuscuta subgen. Grammica</taxon>
        <taxon>Cuscuta sect. Cleistogrammica</taxon>
    </lineage>
</organism>
<name>ATPH_CUSOB</name>
<feature type="chain" id="PRO_0000362908" description="ATP synthase subunit C, plastid">
    <location>
        <begin position="1"/>
        <end position="81"/>
    </location>
</feature>
<feature type="transmembrane region" description="Helical" evidence="1">
    <location>
        <begin position="3"/>
        <end position="23"/>
    </location>
</feature>
<feature type="transmembrane region" description="Helical" evidence="1">
    <location>
        <begin position="57"/>
        <end position="77"/>
    </location>
</feature>
<feature type="site" description="Reversibly protonated during proton transport" evidence="1">
    <location>
        <position position="61"/>
    </location>
</feature>
<proteinExistence type="inferred from homology"/>